<comment type="function">
    <text evidence="1 4 5 7 8 9 10 11 12">Component of the velvet transcription factor complex that controls sexual/asexual developmental ratio in response to light, promoting sexual development in the darkness while stimulating asexual sporulation under illumination (By similarity). The velvet complex hat acts as a global regulator for secondary metabolite gene expression (PubMed:16988822, PubMed:26209694). Controls the expression of the cyclopiazonic acid, aflatrem, and aflatoxin gene clusters (PubMed:16988822, PubMed:17646985). Controls the expression of the sclerotium-specific pigment asparasone A gene cluster (PubMed:16988822, PubMed:17646985). Controls the expression of the aflavarin gene cluster (PubMed:26209694). also controls the production of hydrolases and other extracellular proteins during growth on natural starch-based substrates (PubMed:24584515). Regulates genes involved in the High Osmolarity Glycerol (HOG) signaling pathway (PubMed:24951443). Required for the conidial and sclerotial density-dependent production (PubMed:23994319, PubMed:24412484).</text>
</comment>
<comment type="subunit">
    <text evidence="8">Component of the heterotrimeric velvet complex composed of laeA, veA and velB; VeA acting as a bridging protein between laeA and velB (PubMed:23994319).</text>
</comment>
<comment type="subcellular location">
    <subcellularLocation>
        <location evidence="1">Nucleus</location>
    </subcellularLocation>
    <subcellularLocation>
        <location evidence="1">Cytoplasm</location>
    </subcellularLocation>
    <text evidence="1">Enriched in the nucleus in the dark (By similarity).</text>
</comment>
<comment type="induction">
    <text evidence="6">Expression is positively regulated by laeA (PubMed:18667168).</text>
</comment>
<comment type="domain">
    <text evidence="1">The C-terminal PEST domain is a region rich in proline, glutamic acid, serine and threonine residues that is required for the light-dependent regulation of development and secondary metabolism (By similarity).</text>
</comment>
<comment type="disruption phenotype">
    <text evidence="4 5 7 8 9 10 11 12">Impairs expression of aflR and sclerotia production (PubMed:19411623, PubMed:23994319). Prevents metabolization of host cell lipid reserves and is inhibited by oleic acid in growth assays (PubMed:19411623). Blocks the production of aflatrem and aflatoxin; and strongly decreases cyclopiazonic acid production (PubMed:16988822, PubMed:17646985). Down-regulates transcription of ps27, a polyketide synthase gene belonging to the asparasone A gene cluster (PubMed:24412484). Down-regulates five genes found within the aflavarin cluster (PubMed:26209694). Results in a reduction in transcription levels of oxidative stress response genes after exposure to hydrogen peroxide (PubMed:24951443). Alters the starch-degradation profile (PubMed:24584515).</text>
</comment>
<comment type="similarity">
    <text evidence="14">Belongs to the velvet family. VeA subfamily.</text>
</comment>
<name>VEA_ASPFN</name>
<feature type="chain" id="PRO_0000435760" description="Developmental and secondary metabolism regulator veA">
    <location>
        <begin position="1"/>
        <end position="574"/>
    </location>
</feature>
<feature type="domain" description="Velvet" evidence="2">
    <location>
        <begin position="25"/>
        <end position="230"/>
    </location>
</feature>
<feature type="region of interest" description="Disordered" evidence="3">
    <location>
        <begin position="1"/>
        <end position="22"/>
    </location>
</feature>
<feature type="region of interest" description="Disordered" evidence="3">
    <location>
        <begin position="39"/>
        <end position="60"/>
    </location>
</feature>
<feature type="region of interest" description="Disordered" evidence="3">
    <location>
        <begin position="255"/>
        <end position="500"/>
    </location>
</feature>
<feature type="region of interest" description="PEST" evidence="1">
    <location>
        <begin position="457"/>
        <end position="498"/>
    </location>
</feature>
<feature type="region of interest" description="Disordered" evidence="3">
    <location>
        <begin position="513"/>
        <end position="540"/>
    </location>
</feature>
<feature type="short sequence motif" description="Nuclear localization signal" evidence="1">
    <location>
        <begin position="39"/>
        <end position="44"/>
    </location>
</feature>
<feature type="compositionally biased region" description="Pro residues" evidence="3">
    <location>
        <begin position="314"/>
        <end position="323"/>
    </location>
</feature>
<feature type="compositionally biased region" description="Pro residues" evidence="3">
    <location>
        <begin position="330"/>
        <end position="341"/>
    </location>
</feature>
<feature type="compositionally biased region" description="Polar residues" evidence="3">
    <location>
        <begin position="343"/>
        <end position="353"/>
    </location>
</feature>
<feature type="compositionally biased region" description="Polar residues" evidence="3">
    <location>
        <begin position="385"/>
        <end position="394"/>
    </location>
</feature>
<feature type="compositionally biased region" description="Polar residues" evidence="3">
    <location>
        <begin position="406"/>
        <end position="415"/>
    </location>
</feature>
<feature type="compositionally biased region" description="Polar residues" evidence="3">
    <location>
        <begin position="448"/>
        <end position="458"/>
    </location>
</feature>
<feature type="compositionally biased region" description="Low complexity" evidence="3">
    <location>
        <begin position="459"/>
        <end position="474"/>
    </location>
</feature>
<feature type="compositionally biased region" description="Low complexity" evidence="3">
    <location>
        <begin position="482"/>
        <end position="493"/>
    </location>
</feature>
<feature type="compositionally biased region" description="Basic and acidic residues" evidence="3">
    <location>
        <begin position="513"/>
        <end position="525"/>
    </location>
</feature>
<organism>
    <name type="scientific">Aspergillus flavus (strain ATCC 200026 / FGSC A1120 / IAM 13836 / NRRL 3357 / JCM 12722 / SRRC 167)</name>
    <dbReference type="NCBI Taxonomy" id="332952"/>
    <lineage>
        <taxon>Eukaryota</taxon>
        <taxon>Fungi</taxon>
        <taxon>Dikarya</taxon>
        <taxon>Ascomycota</taxon>
        <taxon>Pezizomycotina</taxon>
        <taxon>Eurotiomycetes</taxon>
        <taxon>Eurotiomycetidae</taxon>
        <taxon>Eurotiales</taxon>
        <taxon>Aspergillaceae</taxon>
        <taxon>Aspergillus</taxon>
        <taxon>Aspergillus subgen. Circumdati</taxon>
    </lineage>
</organism>
<dbReference type="EMBL" id="EQ963479">
    <property type="protein sequence ID" value="EED49824.1"/>
    <property type="molecule type" value="Genomic_DNA"/>
</dbReference>
<dbReference type="RefSeq" id="XP_002380205.1">
    <property type="nucleotide sequence ID" value="XM_002380164.1"/>
</dbReference>
<dbReference type="SMR" id="B8NIF0"/>
<dbReference type="STRING" id="332952.B8NIF0"/>
<dbReference type="EnsemblFungi" id="EED49824">
    <property type="protein sequence ID" value="EED49824"/>
    <property type="gene ID" value="AFLA_066460"/>
</dbReference>
<dbReference type="VEuPathDB" id="FungiDB:AFLA_008583"/>
<dbReference type="eggNOG" id="ENOG502QVY9">
    <property type="taxonomic scope" value="Eukaryota"/>
</dbReference>
<dbReference type="HOGENOM" id="CLU_022491_2_0_1"/>
<dbReference type="GO" id="GO:0005737">
    <property type="term" value="C:cytoplasm"/>
    <property type="evidence" value="ECO:0007669"/>
    <property type="project" value="UniProtKB-SubCell"/>
</dbReference>
<dbReference type="GO" id="GO:0005634">
    <property type="term" value="C:nucleus"/>
    <property type="evidence" value="ECO:0007669"/>
    <property type="project" value="UniProtKB-SubCell"/>
</dbReference>
<dbReference type="GO" id="GO:0030435">
    <property type="term" value="P:sporulation resulting in formation of a cellular spore"/>
    <property type="evidence" value="ECO:0007669"/>
    <property type="project" value="UniProtKB-KW"/>
</dbReference>
<dbReference type="FunFam" id="2.60.40.3960:FF:000001">
    <property type="entry name" value="Sexual development activator VeA"/>
    <property type="match status" value="1"/>
</dbReference>
<dbReference type="Gene3D" id="2.60.40.3960">
    <property type="entry name" value="Velvet domain"/>
    <property type="match status" value="1"/>
</dbReference>
<dbReference type="InterPro" id="IPR021740">
    <property type="entry name" value="Velvet"/>
</dbReference>
<dbReference type="InterPro" id="IPR037525">
    <property type="entry name" value="Velvet_dom"/>
</dbReference>
<dbReference type="InterPro" id="IPR038491">
    <property type="entry name" value="Velvet_dom_sf"/>
</dbReference>
<dbReference type="PANTHER" id="PTHR33572:SF14">
    <property type="entry name" value="DEVELOPMENTAL AND SECONDARY METABOLISM REGULATOR VEA"/>
    <property type="match status" value="1"/>
</dbReference>
<dbReference type="PANTHER" id="PTHR33572">
    <property type="entry name" value="SPORE DEVELOPMENT REGULATOR VOSA"/>
    <property type="match status" value="1"/>
</dbReference>
<dbReference type="Pfam" id="PF11754">
    <property type="entry name" value="Velvet"/>
    <property type="match status" value="2"/>
</dbReference>
<dbReference type="PROSITE" id="PS51821">
    <property type="entry name" value="VELVET"/>
    <property type="match status" value="1"/>
</dbReference>
<accession>B8NIF0</accession>
<sequence>MATRAPLAPPPNETEASVSRITREGKKLTYKLNVMQQPERARACGAGAKSSADRRPVDPPPVVELRVYESDPNDDLNKTDITFAYNANFFLYATLETARPMAQGRFAPNPTCPVLTGVPVAGVAYLDRPSQAGYFIFPDLSVRHEGVYRLNFHLYEETKESKDANENAPIQSMSNPMPSKPMAPKSFLEFRLEVVSVPFTVFSAKKFPGLATSTSLSRVIAEQGCRVRIRRDVRMRRRGEKRTDDYDYDEERVYRSSDRISTPDTHGYAGTPVERPRSTSTSTVDPSFPYGVDAQRRSSGATEYGFQGAQPYQRPLPPAPGPAPAAVSTPAPPAPPAPPSHNPGYQSHLSFGSTQTQYPAPQLPPTPQTASTLAAPYSPHPSYSHARNPSTSAEYETPGYSYPPSRMSTERSSYPKNGLPPLRLEPPKPLNMPSGEPRSSDPNAYHSVAQSAAPRSQTPSSSLVPSLPPLKALSGDYPNNLSQSSSSTSQSPSHDLGAGKKFFWDTGASLSKRSYEDSFGHDDRPLYNGMRPDTESYPRRLSDASRNFYNETRDEMAYKRANGRMATKISPALQ</sequence>
<protein>
    <recommendedName>
        <fullName evidence="14">Developmental and secondary metabolism regulator veA</fullName>
    </recommendedName>
    <alternativeName>
        <fullName evidence="14">Velvet complex subunit A</fullName>
    </alternativeName>
</protein>
<gene>
    <name evidence="13" type="primary">veA</name>
    <name type="ORF">AFLA_066460</name>
</gene>
<evidence type="ECO:0000250" key="1">
    <source>
        <dbReference type="UniProtKB" id="C8VTV4"/>
    </source>
</evidence>
<evidence type="ECO:0000255" key="2">
    <source>
        <dbReference type="PROSITE-ProRule" id="PRU01165"/>
    </source>
</evidence>
<evidence type="ECO:0000256" key="3">
    <source>
        <dbReference type="SAM" id="MobiDB-lite"/>
    </source>
</evidence>
<evidence type="ECO:0000269" key="4">
    <source>
    </source>
</evidence>
<evidence type="ECO:0000269" key="5">
    <source>
    </source>
</evidence>
<evidence type="ECO:0000269" key="6">
    <source>
    </source>
</evidence>
<evidence type="ECO:0000269" key="7">
    <source>
    </source>
</evidence>
<evidence type="ECO:0000269" key="8">
    <source>
    </source>
</evidence>
<evidence type="ECO:0000269" key="9">
    <source>
    </source>
</evidence>
<evidence type="ECO:0000269" key="10">
    <source>
    </source>
</evidence>
<evidence type="ECO:0000269" key="11">
    <source>
    </source>
</evidence>
<evidence type="ECO:0000269" key="12">
    <source>
    </source>
</evidence>
<evidence type="ECO:0000303" key="13">
    <source>
    </source>
</evidence>
<evidence type="ECO:0000305" key="14"/>
<proteinExistence type="evidence at protein level"/>
<keyword id="KW-0963">Cytoplasm</keyword>
<keyword id="KW-0539">Nucleus</keyword>
<keyword id="KW-0749">Sporulation</keyword>
<keyword id="KW-0804">Transcription</keyword>
<keyword id="KW-0805">Transcription regulation</keyword>
<reference key="1">
    <citation type="journal article" date="2015" name="Genome Announc.">
        <title>Genome sequence of Aspergillus flavus NRRL 3357, a strain that causes aflatoxin contamination of food and feed.</title>
        <authorList>
            <person name="Nierman W.C."/>
            <person name="Yu J."/>
            <person name="Fedorova-Abrams N.D."/>
            <person name="Losada L."/>
            <person name="Cleveland T.E."/>
            <person name="Bhatnagar D."/>
            <person name="Bennett J.W."/>
            <person name="Dean R."/>
            <person name="Payne G.A."/>
        </authorList>
    </citation>
    <scope>NUCLEOTIDE SEQUENCE [LARGE SCALE GENOMIC DNA]</scope>
    <source>
        <strain>ATCC 200026 / FGSC A1120 / IAM 13836 / NRRL 3357 / JCM 12722 / SRRC 167</strain>
    </source>
</reference>
<reference key="2">
    <citation type="journal article" date="2007" name="Appl. Microbiol. Biotechnol.">
        <title>Production of cyclopiazonic acid, aflatrem, and aflatoxin by Aspergillus flavus is regulated by veA, a gene necessary for sclerotial formation.</title>
        <authorList>
            <person name="Duran R.M."/>
            <person name="Cary J.W."/>
            <person name="Calvo A.M."/>
        </authorList>
    </citation>
    <scope>FUNCTION</scope>
    <scope>DISRUPTION PHENOTYPE</scope>
</reference>
<reference key="3">
    <citation type="journal article" date="2007" name="Appl. Microbiol. Biotechnol.">
        <title>Elucidation of veA-dependent genes associated with aflatoxin and sclerotial production in Aspergillus flavus by functional genomics.</title>
        <authorList>
            <person name="Cary J.W."/>
            <person name="O'Brian G.R."/>
            <person name="Nielsen D.M."/>
            <person name="Nierman W."/>
            <person name="Harris-Coward P."/>
            <person name="Yu J."/>
            <person name="Bhatnagar D."/>
            <person name="Cleveland T.E."/>
            <person name="Payne G.A."/>
            <person name="Calvo A.M."/>
        </authorList>
    </citation>
    <scope>FUNCTION</scope>
    <scope>DISRUPTION PHENOTYPE</scope>
</reference>
<reference key="4">
    <citation type="journal article" date="2008" name="Fungal Genet. Biol.">
        <title>Requirement of LaeA for secondary metabolism and sclerotial production in Aspergillus flavus.</title>
        <authorList>
            <person name="Kale S.P."/>
            <person name="Milde L."/>
            <person name="Trapp M.K."/>
            <person name="Frisvad J.C."/>
            <person name="Keller N.P."/>
            <person name="Bok J.W."/>
        </authorList>
    </citation>
    <scope>INDUCTION</scope>
</reference>
<reference key="5">
    <citation type="journal article" date="2009" name="Eukaryot. Cell">
        <title>Distinct roles for VeA and LaeA in development and pathogenesis of Aspergillus flavus.</title>
        <authorList>
            <person name="Amaike S."/>
            <person name="Keller N.P."/>
        </authorList>
    </citation>
    <scope>FUNCTION</scope>
    <scope>DISRUPTION PHENOTYPE</scope>
</reference>
<reference key="6">
    <citation type="journal article" date="2013" name="Fungal Genet. Biol.">
        <title>Aspergillus flavus VelB acts distinctly from VeA in conidiation and may coordinate with FluG to modulate sclerotial production.</title>
        <authorList>
            <person name="Chang P.K."/>
            <person name="Scharfenstein L.L."/>
            <person name="Li P."/>
            <person name="Ehrlich K.C."/>
        </authorList>
    </citation>
    <scope>FUNCTION</scope>
    <scope>DISRUPTION PHENOTYPE</scope>
    <scope>IDENTIFICATION IN THE VELVET COMPLEX</scope>
</reference>
<reference key="7">
    <citation type="journal article" date="2014" name="Appl. Microbiol. Biotechnol.">
        <title>The role of Aspergillus flavus veA in the production of extracellular proteins during growth on starch substrates.</title>
        <authorList>
            <person name="Duran R.M."/>
            <person name="Gregersen S."/>
            <person name="Smith T.D."/>
            <person name="Bhetariya P.J."/>
            <person name="Cary J.W."/>
            <person name="Harris-Coward P.Y."/>
            <person name="Mattison C.P."/>
            <person name="Grimm C."/>
            <person name="Calvo A.M."/>
        </authorList>
    </citation>
    <scope>FUNCTION</scope>
    <scope>DISRUPTION PHENOTYPE</scope>
</reference>
<reference key="8">
    <citation type="journal article" date="2014" name="Eukaryot. Cell">
        <title>VeA is associated with the response to oxidative stress in the aflatoxin producer Aspergillus flavus.</title>
        <authorList>
            <person name="Baidya S."/>
            <person name="Duran R.M."/>
            <person name="Lohmar J.M."/>
            <person name="Harris-Coward P.Y."/>
            <person name="Cary J.W."/>
            <person name="Hong S.Y."/>
            <person name="Roze L.V."/>
            <person name="Linz J.E."/>
            <person name="Calvo A.M."/>
        </authorList>
    </citation>
    <scope>FUNCTION</scope>
    <scope>DISRUPTION PHENOTYPE</scope>
</reference>
<reference key="9">
    <citation type="journal article" date="2014" name="Fungal Genet. Biol.">
        <title>Functional characterization of a veA-dependent polyketide synthase gene in Aspergillus flavus necessary for the synthesis of asparasone, a sclerotium-specific pigment.</title>
        <authorList>
            <person name="Cary J.W."/>
            <person name="Harris-Coward P.Y."/>
            <person name="Ehrlich K.C."/>
            <person name="Di Mavungu J.D."/>
            <person name="Malysheva S.V."/>
            <person name="De Saeger S."/>
            <person name="Dowd P.F."/>
            <person name="Shantappa S."/>
            <person name="Martens S.L."/>
            <person name="Calvo A.M."/>
        </authorList>
    </citation>
    <scope>FUNCTION</scope>
    <scope>DISRUPTION PHENOTYPE</scope>
</reference>
<reference key="10">
    <citation type="journal article" date="2015" name="Eukaryot. Cell">
        <title>Transcriptome analysis of Aspergillus flavus reveals veA-dependent regulation of secondary metabolite gene clusters, including the novel aflavarin cluster.</title>
        <authorList>
            <person name="Cary J.W."/>
            <person name="Han Z."/>
            <person name="Yin Y."/>
            <person name="Lohmar J.M."/>
            <person name="Shantappa S."/>
            <person name="Harris-Coward P.Y."/>
            <person name="Mack B."/>
            <person name="Ehrlich K.C."/>
            <person name="Wei Q."/>
            <person name="Arroyo-Manzanares N."/>
            <person name="Uka V."/>
            <person name="Vanhaecke L."/>
            <person name="Bhatnagar D."/>
            <person name="Yu J."/>
            <person name="Nierman W.C."/>
            <person name="Johns M.A."/>
            <person name="Sorensen D."/>
            <person name="Shen H."/>
            <person name="De Saeger S."/>
            <person name="Diana Di Mavungu J."/>
            <person name="Calvo A.M."/>
        </authorList>
    </citation>
    <scope>FUNCTION</scope>
    <scope>DISRUPTION PHENOTYPE</scope>
</reference>